<organism>
    <name type="scientific">Saguinus oedipus</name>
    <name type="common">Cotton-top tamarin</name>
    <dbReference type="NCBI Taxonomy" id="9490"/>
    <lineage>
        <taxon>Eukaryota</taxon>
        <taxon>Metazoa</taxon>
        <taxon>Chordata</taxon>
        <taxon>Craniata</taxon>
        <taxon>Vertebrata</taxon>
        <taxon>Euteleostomi</taxon>
        <taxon>Mammalia</taxon>
        <taxon>Eutheria</taxon>
        <taxon>Euarchontoglires</taxon>
        <taxon>Primates</taxon>
        <taxon>Haplorrhini</taxon>
        <taxon>Platyrrhini</taxon>
        <taxon>Cebidae</taxon>
        <taxon>Callitrichinae</taxon>
        <taxon>Saguinus</taxon>
    </lineage>
</organism>
<protein>
    <recommendedName>
        <fullName>Mannose-binding protein C</fullName>
        <shortName>MBP-C</shortName>
    </recommendedName>
    <alternativeName>
        <fullName>MBP1</fullName>
    </alternativeName>
    <alternativeName>
        <fullName>Mannan-binding protein</fullName>
    </alternativeName>
    <alternativeName>
        <fullName>Mannose-binding lectin</fullName>
    </alternativeName>
</protein>
<name>MBL2_SAGOE</name>
<sequence length="248" mass="26103">MSPFLSLPLLLLSVLSASYSETVTSEDAQKTCPTVIACSSPGINGFPGKDGRDGTKGEKGEPGQGLRGLQGPPGKLGPPGNPGPSGSPGAKGQKGDPGASPDGDSSLAASERKALQTEMARIKKWVTFSLGKQVGKKLFLSNGETMTFDKVKALCAQFQASVATPMNQAENTVIQNLVKEEAFLGITDEETEGQFVDLTGRRLTYTNWNQGEPNNADSREDCVVLLRSGGWNDVPCSSSHLAICEFPV</sequence>
<evidence type="ECO:0000250" key="1"/>
<evidence type="ECO:0000255" key="2">
    <source>
        <dbReference type="PROSITE-ProRule" id="PRU00040"/>
    </source>
</evidence>
<evidence type="ECO:0000256" key="3">
    <source>
        <dbReference type="SAM" id="MobiDB-lite"/>
    </source>
</evidence>
<reference key="1">
    <citation type="journal article" date="2004" name="Genes Immun.">
        <title>Evolution of the mannose-binding lectin gene in primates.</title>
        <authorList>
            <person name="Verga Falzacappa M.V."/>
            <person name="Segat L."/>
            <person name="Puppini B."/>
            <person name="Amoroso A."/>
            <person name="Crovella S."/>
        </authorList>
    </citation>
    <scope>NUCLEOTIDE SEQUENCE [GENOMIC DNA]</scope>
</reference>
<accession>Q66S62</accession>
<proteinExistence type="inferred from homology"/>
<keyword id="KW-0106">Calcium</keyword>
<keyword id="KW-0175">Coiled coil</keyword>
<keyword id="KW-0176">Collagen</keyword>
<keyword id="KW-1018">Complement activation lectin pathway</keyword>
<keyword id="KW-0180">Complement pathway</keyword>
<keyword id="KW-1015">Disulfide bond</keyword>
<keyword id="KW-0379">Hydroxylation</keyword>
<keyword id="KW-0391">Immunity</keyword>
<keyword id="KW-0399">Innate immunity</keyword>
<keyword id="KW-0430">Lectin</keyword>
<keyword id="KW-0465">Mannose-binding</keyword>
<keyword id="KW-0677">Repeat</keyword>
<keyword id="KW-0964">Secreted</keyword>
<keyword id="KW-0732">Signal</keyword>
<gene>
    <name type="primary">MBL2</name>
</gene>
<dbReference type="EMBL" id="AY707491">
    <property type="protein sequence ID" value="AAU11292.1"/>
    <property type="molecule type" value="Genomic_DNA"/>
</dbReference>
<dbReference type="EMBL" id="AY707488">
    <property type="protein sequence ID" value="AAU11292.1"/>
    <property type="status" value="JOINED"/>
    <property type="molecule type" value="Genomic_DNA"/>
</dbReference>
<dbReference type="EMBL" id="AY707489">
    <property type="protein sequence ID" value="AAU11292.1"/>
    <property type="status" value="JOINED"/>
    <property type="molecule type" value="Genomic_DNA"/>
</dbReference>
<dbReference type="EMBL" id="AY707490">
    <property type="protein sequence ID" value="AAU11292.1"/>
    <property type="status" value="JOINED"/>
    <property type="molecule type" value="Genomic_DNA"/>
</dbReference>
<dbReference type="SMR" id="Q66S62"/>
<dbReference type="GO" id="GO:0005581">
    <property type="term" value="C:collagen trimer"/>
    <property type="evidence" value="ECO:0007669"/>
    <property type="project" value="UniProtKB-KW"/>
</dbReference>
<dbReference type="GO" id="GO:0005615">
    <property type="term" value="C:extracellular space"/>
    <property type="evidence" value="ECO:0007669"/>
    <property type="project" value="TreeGrafter"/>
</dbReference>
<dbReference type="GO" id="GO:0005771">
    <property type="term" value="C:multivesicular body"/>
    <property type="evidence" value="ECO:0007669"/>
    <property type="project" value="TreeGrafter"/>
</dbReference>
<dbReference type="GO" id="GO:0005537">
    <property type="term" value="F:D-mannose binding"/>
    <property type="evidence" value="ECO:0007669"/>
    <property type="project" value="UniProtKB-KW"/>
</dbReference>
<dbReference type="GO" id="GO:0006958">
    <property type="term" value="P:complement activation, classical pathway"/>
    <property type="evidence" value="ECO:0007669"/>
    <property type="project" value="UniProtKB-KW"/>
</dbReference>
<dbReference type="GO" id="GO:0001867">
    <property type="term" value="P:complement activation, lectin pathway"/>
    <property type="evidence" value="ECO:0007669"/>
    <property type="project" value="UniProtKB-KW"/>
</dbReference>
<dbReference type="CDD" id="cd03591">
    <property type="entry name" value="CLECT_collectin_like"/>
    <property type="match status" value="1"/>
</dbReference>
<dbReference type="FunFam" id="3.10.100.10:FF:000088">
    <property type="entry name" value="Mannose-binding protein A"/>
    <property type="match status" value="1"/>
</dbReference>
<dbReference type="Gene3D" id="3.10.100.10">
    <property type="entry name" value="Mannose-Binding Protein A, subunit A"/>
    <property type="match status" value="1"/>
</dbReference>
<dbReference type="InterPro" id="IPR001304">
    <property type="entry name" value="C-type_lectin-like"/>
</dbReference>
<dbReference type="InterPro" id="IPR016186">
    <property type="entry name" value="C-type_lectin-like/link_sf"/>
</dbReference>
<dbReference type="InterPro" id="IPR018378">
    <property type="entry name" value="C-type_lectin_CS"/>
</dbReference>
<dbReference type="InterPro" id="IPR051077">
    <property type="entry name" value="Ca-dependent_lectin"/>
</dbReference>
<dbReference type="InterPro" id="IPR008160">
    <property type="entry name" value="Collagen"/>
</dbReference>
<dbReference type="InterPro" id="IPR033990">
    <property type="entry name" value="Collectin_CTLD"/>
</dbReference>
<dbReference type="InterPro" id="IPR016187">
    <property type="entry name" value="CTDL_fold"/>
</dbReference>
<dbReference type="PANTHER" id="PTHR24024:SF34">
    <property type="entry name" value="MANNOSE-BINDING PROTEIN C"/>
    <property type="match status" value="1"/>
</dbReference>
<dbReference type="PANTHER" id="PTHR24024">
    <property type="entry name" value="PULMONARY SURFACTANT-ASSOCIATED PROTEIN A"/>
    <property type="match status" value="1"/>
</dbReference>
<dbReference type="Pfam" id="PF01391">
    <property type="entry name" value="Collagen"/>
    <property type="match status" value="1"/>
</dbReference>
<dbReference type="Pfam" id="PF00059">
    <property type="entry name" value="Lectin_C"/>
    <property type="match status" value="1"/>
</dbReference>
<dbReference type="SMART" id="SM00034">
    <property type="entry name" value="CLECT"/>
    <property type="match status" value="1"/>
</dbReference>
<dbReference type="SUPFAM" id="SSF56436">
    <property type="entry name" value="C-type lectin-like"/>
    <property type="match status" value="1"/>
</dbReference>
<dbReference type="SUPFAM" id="SSF57944">
    <property type="entry name" value="Triple coiled coil domain of C-type lectins"/>
    <property type="match status" value="1"/>
</dbReference>
<dbReference type="PROSITE" id="PS00615">
    <property type="entry name" value="C_TYPE_LECTIN_1"/>
    <property type="match status" value="1"/>
</dbReference>
<dbReference type="PROSITE" id="PS50041">
    <property type="entry name" value="C_TYPE_LECTIN_2"/>
    <property type="match status" value="1"/>
</dbReference>
<comment type="function">
    <text evidence="1">Calcium-dependent lectin involved in innate immune defense. Binds mannose, fucose and N-acetylglucosamine on different microorganisms and activates the lectin complement pathway. Binds to late apoptotic cells, as well as to apoptotic blebs and to necrotic cells, but not to early apoptotic cells, facilitating their uptake by macrophages (By similarity).</text>
</comment>
<comment type="subunit">
    <text evidence="1">Oligomeric complex of 3 or more homotrimers. Interacts with MASP1 and MASP2 (By similarity). Interacts with MEP1A and MEP1B and may inhibit their catalytic activity (By similarity).</text>
</comment>
<comment type="subcellular location">
    <subcellularLocation>
        <location evidence="1">Secreted</location>
    </subcellularLocation>
</comment>
<comment type="domain">
    <text evidence="1">The coiled-coil domain mediates trimerization.</text>
</comment>
<comment type="PTM">
    <text evidence="1">Hydroxylation on proline residues within the sequence motif, GXPG, is most likely to be 4-hydroxy as this fits the requirement for 4-hydroxylation in vertebrates.</text>
</comment>
<feature type="signal peptide" evidence="1">
    <location>
        <begin position="1"/>
        <end position="20"/>
    </location>
</feature>
<feature type="chain" id="PRO_0000017412" description="Mannose-binding protein C">
    <location>
        <begin position="21"/>
        <end position="248"/>
    </location>
</feature>
<feature type="domain" description="Collagen-like">
    <location>
        <begin position="42"/>
        <end position="99"/>
    </location>
</feature>
<feature type="domain" description="C-type lectin" evidence="2">
    <location>
        <begin position="134"/>
        <end position="245"/>
    </location>
</feature>
<feature type="region of interest" description="Disordered" evidence="3">
    <location>
        <begin position="36"/>
        <end position="112"/>
    </location>
</feature>
<feature type="coiled-coil region" evidence="1">
    <location>
        <begin position="112"/>
        <end position="130"/>
    </location>
</feature>
<feature type="compositionally biased region" description="Basic and acidic residues" evidence="3">
    <location>
        <begin position="49"/>
        <end position="61"/>
    </location>
</feature>
<feature type="modified residue" description="4-hydroxyproline" evidence="1">
    <location>
        <position position="47"/>
    </location>
</feature>
<feature type="modified residue" description="4-hydroxyproline" evidence="1">
    <location>
        <position position="73"/>
    </location>
</feature>
<feature type="modified residue" description="4-hydroxyproline" evidence="1">
    <location>
        <position position="79"/>
    </location>
</feature>
<feature type="modified residue" description="4-hydroxyproline" evidence="1">
    <location>
        <position position="82"/>
    </location>
</feature>
<feature type="modified residue" description="4-hydroxyproline" evidence="1">
    <location>
        <position position="88"/>
    </location>
</feature>
<feature type="disulfide bond" evidence="2">
    <location>
        <begin position="155"/>
        <end position="244"/>
    </location>
</feature>
<feature type="disulfide bond" evidence="2">
    <location>
        <begin position="222"/>
        <end position="236"/>
    </location>
</feature>